<evidence type="ECO:0000255" key="1">
    <source>
        <dbReference type="HAMAP-Rule" id="MF_01554"/>
    </source>
</evidence>
<accession>Q7V4W4</accession>
<feature type="chain" id="PRO_0000147934" description="Phosphoglucosamine mutase">
    <location>
        <begin position="1"/>
        <end position="468"/>
    </location>
</feature>
<feature type="active site" description="Phosphoserine intermediate" evidence="1">
    <location>
        <position position="112"/>
    </location>
</feature>
<feature type="binding site" description="via phosphate group" evidence="1">
    <location>
        <position position="112"/>
    </location>
    <ligand>
        <name>Mg(2+)</name>
        <dbReference type="ChEBI" id="CHEBI:18420"/>
    </ligand>
</feature>
<feature type="binding site" evidence="1">
    <location>
        <position position="254"/>
    </location>
    <ligand>
        <name>Mg(2+)</name>
        <dbReference type="ChEBI" id="CHEBI:18420"/>
    </ligand>
</feature>
<feature type="binding site" evidence="1">
    <location>
        <position position="256"/>
    </location>
    <ligand>
        <name>Mg(2+)</name>
        <dbReference type="ChEBI" id="CHEBI:18420"/>
    </ligand>
</feature>
<feature type="binding site" evidence="1">
    <location>
        <position position="258"/>
    </location>
    <ligand>
        <name>Mg(2+)</name>
        <dbReference type="ChEBI" id="CHEBI:18420"/>
    </ligand>
</feature>
<feature type="modified residue" description="Phosphoserine" evidence="1">
    <location>
        <position position="112"/>
    </location>
</feature>
<dbReference type="EC" id="5.4.2.10" evidence="1"/>
<dbReference type="EMBL" id="BX548175">
    <property type="protein sequence ID" value="CAE21998.1"/>
    <property type="molecule type" value="Genomic_DNA"/>
</dbReference>
<dbReference type="RefSeq" id="WP_011131190.1">
    <property type="nucleotide sequence ID" value="NC_005071.1"/>
</dbReference>
<dbReference type="SMR" id="Q7V4W4"/>
<dbReference type="KEGG" id="pmt:PMT_1823"/>
<dbReference type="eggNOG" id="COG1109">
    <property type="taxonomic scope" value="Bacteria"/>
</dbReference>
<dbReference type="HOGENOM" id="CLU_016950_7_0_3"/>
<dbReference type="OrthoDB" id="9806956at2"/>
<dbReference type="Proteomes" id="UP000001423">
    <property type="component" value="Chromosome"/>
</dbReference>
<dbReference type="GO" id="GO:0005829">
    <property type="term" value="C:cytosol"/>
    <property type="evidence" value="ECO:0007669"/>
    <property type="project" value="TreeGrafter"/>
</dbReference>
<dbReference type="GO" id="GO:0000287">
    <property type="term" value="F:magnesium ion binding"/>
    <property type="evidence" value="ECO:0007669"/>
    <property type="project" value="UniProtKB-UniRule"/>
</dbReference>
<dbReference type="GO" id="GO:0008966">
    <property type="term" value="F:phosphoglucosamine mutase activity"/>
    <property type="evidence" value="ECO:0007669"/>
    <property type="project" value="UniProtKB-UniRule"/>
</dbReference>
<dbReference type="GO" id="GO:0004615">
    <property type="term" value="F:phosphomannomutase activity"/>
    <property type="evidence" value="ECO:0007669"/>
    <property type="project" value="TreeGrafter"/>
</dbReference>
<dbReference type="GO" id="GO:0005975">
    <property type="term" value="P:carbohydrate metabolic process"/>
    <property type="evidence" value="ECO:0007669"/>
    <property type="project" value="InterPro"/>
</dbReference>
<dbReference type="GO" id="GO:0009252">
    <property type="term" value="P:peptidoglycan biosynthetic process"/>
    <property type="evidence" value="ECO:0007669"/>
    <property type="project" value="TreeGrafter"/>
</dbReference>
<dbReference type="GO" id="GO:0006048">
    <property type="term" value="P:UDP-N-acetylglucosamine biosynthetic process"/>
    <property type="evidence" value="ECO:0007669"/>
    <property type="project" value="TreeGrafter"/>
</dbReference>
<dbReference type="CDD" id="cd05802">
    <property type="entry name" value="GlmM"/>
    <property type="match status" value="1"/>
</dbReference>
<dbReference type="FunFam" id="3.30.310.50:FF:000001">
    <property type="entry name" value="Phosphoglucosamine mutase"/>
    <property type="match status" value="1"/>
</dbReference>
<dbReference type="FunFam" id="3.40.120.10:FF:000002">
    <property type="entry name" value="Phosphoglucosamine mutase"/>
    <property type="match status" value="1"/>
</dbReference>
<dbReference type="Gene3D" id="3.40.120.10">
    <property type="entry name" value="Alpha-D-Glucose-1,6-Bisphosphate, subunit A, domain 3"/>
    <property type="match status" value="3"/>
</dbReference>
<dbReference type="Gene3D" id="3.30.310.50">
    <property type="entry name" value="Alpha-D-phosphohexomutase, C-terminal domain"/>
    <property type="match status" value="1"/>
</dbReference>
<dbReference type="HAMAP" id="MF_01554_B">
    <property type="entry name" value="GlmM_B"/>
    <property type="match status" value="1"/>
</dbReference>
<dbReference type="InterPro" id="IPR005844">
    <property type="entry name" value="A-D-PHexomutase_a/b/a-I"/>
</dbReference>
<dbReference type="InterPro" id="IPR016055">
    <property type="entry name" value="A-D-PHexomutase_a/b/a-I/II/III"/>
</dbReference>
<dbReference type="InterPro" id="IPR005845">
    <property type="entry name" value="A-D-PHexomutase_a/b/a-II"/>
</dbReference>
<dbReference type="InterPro" id="IPR005846">
    <property type="entry name" value="A-D-PHexomutase_a/b/a-III"/>
</dbReference>
<dbReference type="InterPro" id="IPR005843">
    <property type="entry name" value="A-D-PHexomutase_C"/>
</dbReference>
<dbReference type="InterPro" id="IPR036900">
    <property type="entry name" value="A-D-PHexomutase_C_sf"/>
</dbReference>
<dbReference type="InterPro" id="IPR016066">
    <property type="entry name" value="A-D-PHexomutase_CS"/>
</dbReference>
<dbReference type="InterPro" id="IPR005841">
    <property type="entry name" value="Alpha-D-phosphohexomutase_SF"/>
</dbReference>
<dbReference type="InterPro" id="IPR006352">
    <property type="entry name" value="GlmM_bact"/>
</dbReference>
<dbReference type="InterPro" id="IPR050060">
    <property type="entry name" value="Phosphoglucosamine_mutase"/>
</dbReference>
<dbReference type="NCBIfam" id="TIGR01455">
    <property type="entry name" value="glmM"/>
    <property type="match status" value="1"/>
</dbReference>
<dbReference type="PANTHER" id="PTHR42946:SF1">
    <property type="entry name" value="PHOSPHOGLUCOMUTASE (ALPHA-D-GLUCOSE-1,6-BISPHOSPHATE-DEPENDENT)"/>
    <property type="match status" value="1"/>
</dbReference>
<dbReference type="PANTHER" id="PTHR42946">
    <property type="entry name" value="PHOSPHOHEXOSE MUTASE"/>
    <property type="match status" value="1"/>
</dbReference>
<dbReference type="Pfam" id="PF02878">
    <property type="entry name" value="PGM_PMM_I"/>
    <property type="match status" value="1"/>
</dbReference>
<dbReference type="Pfam" id="PF02879">
    <property type="entry name" value="PGM_PMM_II"/>
    <property type="match status" value="1"/>
</dbReference>
<dbReference type="Pfam" id="PF02880">
    <property type="entry name" value="PGM_PMM_III"/>
    <property type="match status" value="1"/>
</dbReference>
<dbReference type="Pfam" id="PF00408">
    <property type="entry name" value="PGM_PMM_IV"/>
    <property type="match status" value="1"/>
</dbReference>
<dbReference type="PRINTS" id="PR00509">
    <property type="entry name" value="PGMPMM"/>
</dbReference>
<dbReference type="SUPFAM" id="SSF55957">
    <property type="entry name" value="Phosphoglucomutase, C-terminal domain"/>
    <property type="match status" value="1"/>
</dbReference>
<dbReference type="SUPFAM" id="SSF53738">
    <property type="entry name" value="Phosphoglucomutase, first 3 domains"/>
    <property type="match status" value="3"/>
</dbReference>
<dbReference type="PROSITE" id="PS00710">
    <property type="entry name" value="PGM_PMM"/>
    <property type="match status" value="1"/>
</dbReference>
<keyword id="KW-0413">Isomerase</keyword>
<keyword id="KW-0460">Magnesium</keyword>
<keyword id="KW-0479">Metal-binding</keyword>
<keyword id="KW-0597">Phosphoprotein</keyword>
<keyword id="KW-1185">Reference proteome</keyword>
<protein>
    <recommendedName>
        <fullName evidence="1">Phosphoglucosamine mutase</fullName>
        <ecNumber evidence="1">5.4.2.10</ecNumber>
    </recommendedName>
</protein>
<proteinExistence type="inferred from homology"/>
<reference key="1">
    <citation type="journal article" date="2003" name="Nature">
        <title>Genome divergence in two Prochlorococcus ecotypes reflects oceanic niche differentiation.</title>
        <authorList>
            <person name="Rocap G."/>
            <person name="Larimer F.W."/>
            <person name="Lamerdin J.E."/>
            <person name="Malfatti S."/>
            <person name="Chain P."/>
            <person name="Ahlgren N.A."/>
            <person name="Arellano A."/>
            <person name="Coleman M."/>
            <person name="Hauser L."/>
            <person name="Hess W.R."/>
            <person name="Johnson Z.I."/>
            <person name="Land M.L."/>
            <person name="Lindell D."/>
            <person name="Post A.F."/>
            <person name="Regala W."/>
            <person name="Shah M."/>
            <person name="Shaw S.L."/>
            <person name="Steglich C."/>
            <person name="Sullivan M.B."/>
            <person name="Ting C.S."/>
            <person name="Tolonen A."/>
            <person name="Webb E.A."/>
            <person name="Zinser E.R."/>
            <person name="Chisholm S.W."/>
        </authorList>
    </citation>
    <scope>NUCLEOTIDE SEQUENCE [LARGE SCALE GENOMIC DNA]</scope>
    <source>
        <strain>MIT 9313</strain>
    </source>
</reference>
<organism>
    <name type="scientific">Prochlorococcus marinus (strain MIT 9313)</name>
    <dbReference type="NCBI Taxonomy" id="74547"/>
    <lineage>
        <taxon>Bacteria</taxon>
        <taxon>Bacillati</taxon>
        <taxon>Cyanobacteriota</taxon>
        <taxon>Cyanophyceae</taxon>
        <taxon>Synechococcales</taxon>
        <taxon>Prochlorococcaceae</taxon>
        <taxon>Prochlorococcus</taxon>
    </lineage>
</organism>
<sequence>MVFAALDPLGVPLGTAQASFGTDGIRGRVGTLLTPAFILQVGYWCGQVLPDQGPVLIGMDSRSSGAMVASALTAGLTAAGREVWTLGLCPTPAVPGLIRKLGAAGGLMVSASHNPPEDNGIKVFGADGAKLSPAKQGLIEAGLRGEAIGDKGRPTITSCGPAYQRNELLSHYRDALLASVLHQRLDGVPIVLDLCWGAATACGAEVFAALGADLTVLHGEPDGRRINVGCGSTQLEPLRRAVIERGAIMGFAFDGDADRMLALDGHGRVVDGDHVLYLWGSDLQDRQALPQQRLVATVMSNLGFERAWQQRGGVLERTPVGDQHVYAAMVESNAALGGEQSGHILSAAHGLCGDGVLTALQLATLCHGRGLSLGEWLDQSFQAFPQKLVNVRVPDLERRMGWQHCEPLQEAVLAAEAAMGEDGRVLVRASGTEPLLRVMIEAADSAAVEFWTAQLADLAEQHLNRGCV</sequence>
<name>GLMM_PROMM</name>
<comment type="function">
    <text evidence="1">Catalyzes the conversion of glucosamine-6-phosphate to glucosamine-1-phosphate.</text>
</comment>
<comment type="catalytic activity">
    <reaction evidence="1">
        <text>alpha-D-glucosamine 1-phosphate = D-glucosamine 6-phosphate</text>
        <dbReference type="Rhea" id="RHEA:23424"/>
        <dbReference type="ChEBI" id="CHEBI:58516"/>
        <dbReference type="ChEBI" id="CHEBI:58725"/>
        <dbReference type="EC" id="5.4.2.10"/>
    </reaction>
</comment>
<comment type="cofactor">
    <cofactor evidence="1">
        <name>Mg(2+)</name>
        <dbReference type="ChEBI" id="CHEBI:18420"/>
    </cofactor>
    <text evidence="1">Binds 1 Mg(2+) ion per subunit.</text>
</comment>
<comment type="PTM">
    <text evidence="1">Activated by phosphorylation.</text>
</comment>
<comment type="similarity">
    <text evidence="1">Belongs to the phosphohexose mutase family.</text>
</comment>
<gene>
    <name evidence="1" type="primary">glmM</name>
    <name type="ordered locus">PMT_1823</name>
</gene>